<proteinExistence type="inferred from homology"/>
<protein>
    <recommendedName>
        <fullName evidence="1">NAD(P)H dehydrogenase (quinone)</fullName>
        <ecNumber evidence="1">1.6.5.2</ecNumber>
    </recommendedName>
    <alternativeName>
        <fullName>Flavoprotein WrbA</fullName>
    </alternativeName>
    <alternativeName>
        <fullName evidence="1">NAD(P)H:quinone oxidoreductase</fullName>
        <shortName evidence="1">NQO</shortName>
    </alternativeName>
</protein>
<comment type="catalytic activity">
    <reaction evidence="1">
        <text>a quinone + NADH + H(+) = a quinol + NAD(+)</text>
        <dbReference type="Rhea" id="RHEA:46160"/>
        <dbReference type="ChEBI" id="CHEBI:15378"/>
        <dbReference type="ChEBI" id="CHEBI:24646"/>
        <dbReference type="ChEBI" id="CHEBI:57540"/>
        <dbReference type="ChEBI" id="CHEBI:57945"/>
        <dbReference type="ChEBI" id="CHEBI:132124"/>
        <dbReference type="EC" id="1.6.5.2"/>
    </reaction>
</comment>
<comment type="catalytic activity">
    <reaction evidence="1">
        <text>a quinone + NADPH + H(+) = a quinol + NADP(+)</text>
        <dbReference type="Rhea" id="RHEA:46164"/>
        <dbReference type="ChEBI" id="CHEBI:15378"/>
        <dbReference type="ChEBI" id="CHEBI:24646"/>
        <dbReference type="ChEBI" id="CHEBI:57783"/>
        <dbReference type="ChEBI" id="CHEBI:58349"/>
        <dbReference type="ChEBI" id="CHEBI:132124"/>
        <dbReference type="EC" id="1.6.5.2"/>
    </reaction>
</comment>
<comment type="cofactor">
    <cofactor evidence="1">
        <name>FMN</name>
        <dbReference type="ChEBI" id="CHEBI:58210"/>
    </cofactor>
    <text evidence="1">Binds 1 FMN per monomer.</text>
</comment>
<comment type="similarity">
    <text evidence="1">Belongs to the WrbA family.</text>
</comment>
<name>NQOR_SALAR</name>
<reference key="1">
    <citation type="submission" date="2007-11" db="EMBL/GenBank/DDBJ databases">
        <authorList>
            <consortium name="The Salmonella enterica serovar Arizonae Genome Sequencing Project"/>
            <person name="McClelland M."/>
            <person name="Sanderson E.K."/>
            <person name="Porwollik S."/>
            <person name="Spieth J."/>
            <person name="Clifton W.S."/>
            <person name="Fulton R."/>
            <person name="Chunyan W."/>
            <person name="Wollam A."/>
            <person name="Shah N."/>
            <person name="Pepin K."/>
            <person name="Bhonagiri V."/>
            <person name="Nash W."/>
            <person name="Johnson M."/>
            <person name="Thiruvilangam P."/>
            <person name="Wilson R."/>
        </authorList>
    </citation>
    <scope>NUCLEOTIDE SEQUENCE [LARGE SCALE GENOMIC DNA]</scope>
    <source>
        <strain>ATCC BAA-731 / CDC346-86 / RSK2980</strain>
    </source>
</reference>
<evidence type="ECO:0000255" key="1">
    <source>
        <dbReference type="HAMAP-Rule" id="MF_01017"/>
    </source>
</evidence>
<accession>A9MH45</accession>
<gene>
    <name type="ordered locus">SARI_01881</name>
</gene>
<keyword id="KW-0285">Flavoprotein</keyword>
<keyword id="KW-0288">FMN</keyword>
<keyword id="KW-0520">NAD</keyword>
<keyword id="KW-0521">NADP</keyword>
<keyword id="KW-0547">Nucleotide-binding</keyword>
<keyword id="KW-0560">Oxidoreductase</keyword>
<keyword id="KW-1185">Reference proteome</keyword>
<sequence length="198" mass="20852">MAKILVLYYSMYGHIETMAHAVAEGAKKVDGAEVIIKRVPETMPPEIFAKAGGKTQNAPVATPQELADYDAIIFGTPTRFGNMSGQMRTFLDQTGGLWASGALYGKLGSVFSSTGTGGGQEQTITSTWTTLAHHGMVIVPIGYAAQELFDVSQVRGGTPYGATTIAGGDGSRQPSQEELSIARYQGEYVAGLAVKLNG</sequence>
<organism>
    <name type="scientific">Salmonella arizonae (strain ATCC BAA-731 / CDC346-86 / RSK2980)</name>
    <dbReference type="NCBI Taxonomy" id="41514"/>
    <lineage>
        <taxon>Bacteria</taxon>
        <taxon>Pseudomonadati</taxon>
        <taxon>Pseudomonadota</taxon>
        <taxon>Gammaproteobacteria</taxon>
        <taxon>Enterobacterales</taxon>
        <taxon>Enterobacteriaceae</taxon>
        <taxon>Salmonella</taxon>
    </lineage>
</organism>
<feature type="chain" id="PRO_1000084145" description="NAD(P)H dehydrogenase (quinone)">
    <location>
        <begin position="1"/>
        <end position="198"/>
    </location>
</feature>
<feature type="domain" description="Flavodoxin-like" evidence="1">
    <location>
        <begin position="4"/>
        <end position="189"/>
    </location>
</feature>
<feature type="binding site" evidence="1">
    <location>
        <begin position="10"/>
        <end position="15"/>
    </location>
    <ligand>
        <name>FMN</name>
        <dbReference type="ChEBI" id="CHEBI:58210"/>
    </ligand>
</feature>
<feature type="binding site" evidence="1">
    <location>
        <position position="12"/>
    </location>
    <ligand>
        <name>NAD(+)</name>
        <dbReference type="ChEBI" id="CHEBI:57540"/>
    </ligand>
</feature>
<feature type="binding site" evidence="1">
    <location>
        <begin position="78"/>
        <end position="80"/>
    </location>
    <ligand>
        <name>FMN</name>
        <dbReference type="ChEBI" id="CHEBI:58210"/>
    </ligand>
</feature>
<feature type="binding site" evidence="1">
    <location>
        <position position="98"/>
    </location>
    <ligand>
        <name>substrate</name>
    </ligand>
</feature>
<feature type="binding site" evidence="1">
    <location>
        <begin position="113"/>
        <end position="118"/>
    </location>
    <ligand>
        <name>FMN</name>
        <dbReference type="ChEBI" id="CHEBI:58210"/>
    </ligand>
</feature>
<feature type="binding site" evidence="1">
    <location>
        <position position="133"/>
    </location>
    <ligand>
        <name>FMN</name>
        <dbReference type="ChEBI" id="CHEBI:58210"/>
    </ligand>
</feature>
<dbReference type="EC" id="1.6.5.2" evidence="1"/>
<dbReference type="EMBL" id="CP000880">
    <property type="protein sequence ID" value="ABX21764.1"/>
    <property type="molecule type" value="Genomic_DNA"/>
</dbReference>
<dbReference type="SMR" id="A9MH45"/>
<dbReference type="STRING" id="41514.SARI_01881"/>
<dbReference type="CAZy" id="AA6">
    <property type="family name" value="Auxiliary Activities 6"/>
</dbReference>
<dbReference type="KEGG" id="ses:SARI_01881"/>
<dbReference type="HOGENOM" id="CLU_051402_0_2_6"/>
<dbReference type="Proteomes" id="UP000002084">
    <property type="component" value="Chromosome"/>
</dbReference>
<dbReference type="GO" id="GO:0016020">
    <property type="term" value="C:membrane"/>
    <property type="evidence" value="ECO:0007669"/>
    <property type="project" value="TreeGrafter"/>
</dbReference>
<dbReference type="GO" id="GO:0050660">
    <property type="term" value="F:flavin adenine dinucleotide binding"/>
    <property type="evidence" value="ECO:0007669"/>
    <property type="project" value="UniProtKB-UniRule"/>
</dbReference>
<dbReference type="GO" id="GO:0010181">
    <property type="term" value="F:FMN binding"/>
    <property type="evidence" value="ECO:0007669"/>
    <property type="project" value="InterPro"/>
</dbReference>
<dbReference type="GO" id="GO:0051287">
    <property type="term" value="F:NAD binding"/>
    <property type="evidence" value="ECO:0007669"/>
    <property type="project" value="UniProtKB-UniRule"/>
</dbReference>
<dbReference type="GO" id="GO:0050136">
    <property type="term" value="F:NADH:ubiquinone reductase (non-electrogenic) activity"/>
    <property type="evidence" value="ECO:0007669"/>
    <property type="project" value="RHEA"/>
</dbReference>
<dbReference type="GO" id="GO:0050661">
    <property type="term" value="F:NADP binding"/>
    <property type="evidence" value="ECO:0007669"/>
    <property type="project" value="UniProtKB-UniRule"/>
</dbReference>
<dbReference type="GO" id="GO:0008753">
    <property type="term" value="F:NADPH dehydrogenase (quinone) activity"/>
    <property type="evidence" value="ECO:0007669"/>
    <property type="project" value="RHEA"/>
</dbReference>
<dbReference type="FunFam" id="3.40.50.360:FF:000004">
    <property type="entry name" value="NAD(P)H dehydrogenase (quinone)"/>
    <property type="match status" value="1"/>
</dbReference>
<dbReference type="Gene3D" id="3.40.50.360">
    <property type="match status" value="1"/>
</dbReference>
<dbReference type="HAMAP" id="MF_01017">
    <property type="entry name" value="NQOR"/>
    <property type="match status" value="1"/>
</dbReference>
<dbReference type="InterPro" id="IPR008254">
    <property type="entry name" value="Flavodoxin/NO_synth"/>
</dbReference>
<dbReference type="InterPro" id="IPR029039">
    <property type="entry name" value="Flavoprotein-like_sf"/>
</dbReference>
<dbReference type="InterPro" id="IPR010089">
    <property type="entry name" value="Flavoprotein_WrbA-like"/>
</dbReference>
<dbReference type="InterPro" id="IPR005025">
    <property type="entry name" value="FMN_Rdtase-like_dom"/>
</dbReference>
<dbReference type="InterPro" id="IPR037513">
    <property type="entry name" value="NQO"/>
</dbReference>
<dbReference type="NCBIfam" id="TIGR01755">
    <property type="entry name" value="flav_wrbA"/>
    <property type="match status" value="1"/>
</dbReference>
<dbReference type="NCBIfam" id="NF002999">
    <property type="entry name" value="PRK03767.1"/>
    <property type="match status" value="1"/>
</dbReference>
<dbReference type="PANTHER" id="PTHR30546">
    <property type="entry name" value="FLAVODOXIN-RELATED PROTEIN WRBA-RELATED"/>
    <property type="match status" value="1"/>
</dbReference>
<dbReference type="PANTHER" id="PTHR30546:SF23">
    <property type="entry name" value="FLAVOPROTEIN-LIKE PROTEIN YCP4-RELATED"/>
    <property type="match status" value="1"/>
</dbReference>
<dbReference type="Pfam" id="PF03358">
    <property type="entry name" value="FMN_red"/>
    <property type="match status" value="1"/>
</dbReference>
<dbReference type="SUPFAM" id="SSF52218">
    <property type="entry name" value="Flavoproteins"/>
    <property type="match status" value="1"/>
</dbReference>
<dbReference type="PROSITE" id="PS50902">
    <property type="entry name" value="FLAVODOXIN_LIKE"/>
    <property type="match status" value="1"/>
</dbReference>